<gene>
    <name type="primary">F</name>
</gene>
<protein>
    <recommendedName>
        <fullName>Fusion glycoprotein F0</fullName>
    </recommendedName>
    <component>
        <recommendedName>
            <fullName>Fusion glycoprotein F2</fullName>
        </recommendedName>
    </component>
    <component>
        <recommendedName>
            <fullName>Fusion glycoprotein F1</fullName>
        </recommendedName>
    </component>
</protein>
<sequence length="553" mass="59022">MGPRSSTRIPIPLMLTIRIALALSCVHLASSLDGRPLAAAGIVVTGDKAVNIYTSSQTGSIIVKLHPNMPKDKEACAKAPLEAYNRTLTTLLTPLGDSIRRIQESVTTSGGRRQKRFIGAIIGSVALGVATAAQITAASALIQANQNAANILRLKESITATIEAVHEVTDGLSQLAVAVGKMQQFVNDQFNNTAQELDCIKITQQVGVELNLYLTELTTVFGPQITSPALTQLTIQALYNLAGGNMDYLLTKLGVGNNQLSSLIGSGLITGNPILYDSQTQLLGIQVTLPSVGNLNNMRATYLETLSVSTTKGFASALVPKVVTQVGSVIEELDTSYCIETDLDLYCTRIVTFPMSPGIYSCLNGNTSACMYSKTEGALTTPYMTLKGSVIANCKMTTCRCADPPGIISQNYGEAVSLIDRHSCNVLSLDGITLRLSGEFDATYQKNISILDSQVIVTGNLDISTELGNVNNSISNALDKLEESNSKLDKVNVKLTSTSALITYIALTAISLVCGILSLVLACYLMYKQKAQQKTLLWLGNNTLGQMRATTKM</sequence>
<evidence type="ECO:0000250" key="1"/>
<evidence type="ECO:0000255" key="2"/>
<evidence type="ECO:0000305" key="3"/>
<evidence type="ECO:0007829" key="4">
    <source>
        <dbReference type="PDB" id="3MAW"/>
    </source>
</evidence>
<proteinExistence type="evidence at protein level"/>
<organismHost>
    <name type="scientific">Gallus gallus</name>
    <name type="common">Chicken</name>
    <dbReference type="NCBI Taxonomy" id="9031"/>
</organismHost>
<keyword id="KW-0002">3D-structure</keyword>
<keyword id="KW-0165">Cleavage on pair of basic residues</keyword>
<keyword id="KW-0175">Coiled coil</keyword>
<keyword id="KW-1015">Disulfide bond</keyword>
<keyword id="KW-1169">Fusion of virus membrane with host cell membrane</keyword>
<keyword id="KW-1168">Fusion of virus membrane with host membrane</keyword>
<keyword id="KW-0325">Glycoprotein</keyword>
<keyword id="KW-1032">Host cell membrane</keyword>
<keyword id="KW-1043">Host membrane</keyword>
<keyword id="KW-0449">Lipoprotein</keyword>
<keyword id="KW-0472">Membrane</keyword>
<keyword id="KW-0564">Palmitate</keyword>
<keyword id="KW-0732">Signal</keyword>
<keyword id="KW-0812">Transmembrane</keyword>
<keyword id="KW-1133">Transmembrane helix</keyword>
<keyword id="KW-0261">Viral envelope protein</keyword>
<keyword id="KW-1162">Viral penetration into host cytoplasm</keyword>
<keyword id="KW-0946">Virion</keyword>
<keyword id="KW-1160">Virus entry into host cell</keyword>
<feature type="signal peptide" evidence="2">
    <location>
        <begin position="1"/>
        <end position="31"/>
    </location>
</feature>
<feature type="chain" id="PRO_0000039291" description="Fusion glycoprotein F0">
    <location>
        <begin position="32"/>
        <end position="553"/>
    </location>
</feature>
<feature type="chain" id="PRO_0000039292" description="Fusion glycoprotein F2">
    <location>
        <begin position="32"/>
        <end position="116"/>
    </location>
</feature>
<feature type="chain" id="PRO_0000039293" description="Fusion glycoprotein F1">
    <location>
        <begin position="117"/>
        <end position="553"/>
    </location>
</feature>
<feature type="topological domain" description="Extracellular" evidence="1">
    <location>
        <begin position="32"/>
        <end position="500"/>
    </location>
</feature>
<feature type="transmembrane region" description="Helical" evidence="1">
    <location>
        <begin position="501"/>
        <end position="521"/>
    </location>
</feature>
<feature type="topological domain" description="Cytoplasmic" evidence="1">
    <location>
        <begin position="522"/>
        <end position="553"/>
    </location>
</feature>
<feature type="region of interest" description="Fusion peptide" evidence="1">
    <location>
        <begin position="117"/>
        <end position="141"/>
    </location>
</feature>
<feature type="coiled-coil region" evidence="2">
    <location>
        <begin position="142"/>
        <end position="170"/>
    </location>
</feature>
<feature type="coiled-coil region" evidence="2">
    <location>
        <begin position="466"/>
        <end position="491"/>
    </location>
</feature>
<feature type="site" description="Cleavage; by host" evidence="1">
    <location>
        <begin position="116"/>
        <end position="117"/>
    </location>
</feature>
<feature type="lipid moiety-binding region" description="S-palmitoyl cysteine; by host" evidence="2">
    <location>
        <position position="523"/>
    </location>
</feature>
<feature type="glycosylation site" description="N-linked (GlcNAc...) asparagine; by host" evidence="2">
    <location>
        <position position="85"/>
    </location>
</feature>
<feature type="glycosylation site" description="N-linked (GlcNAc...) asparagine; by host" evidence="2">
    <location>
        <position position="191"/>
    </location>
</feature>
<feature type="glycosylation site" description="N-linked (GlcNAc...) asparagine; by host" evidence="2">
    <location>
        <position position="366"/>
    </location>
</feature>
<feature type="glycosylation site" description="N-linked (GlcNAc...) asparagine; by host" evidence="2">
    <location>
        <position position="447"/>
    </location>
</feature>
<feature type="glycosylation site" description="N-linked (GlcNAc...) asparagine; by host" evidence="2">
    <location>
        <position position="471"/>
    </location>
</feature>
<feature type="disulfide bond" description="Interchain (between F2 and F1 chains)" evidence="1">
    <location>
        <begin position="76"/>
        <end position="199"/>
    </location>
</feature>
<feature type="disulfide bond" evidence="1">
    <location>
        <begin position="338"/>
        <end position="347"/>
    </location>
</feature>
<feature type="disulfide bond" evidence="1">
    <location>
        <begin position="362"/>
        <end position="370"/>
    </location>
</feature>
<feature type="disulfide bond" evidence="1">
    <location>
        <begin position="394"/>
        <end position="399"/>
    </location>
</feature>
<feature type="disulfide bond" evidence="1">
    <location>
        <begin position="401"/>
        <end position="424"/>
    </location>
</feature>
<feature type="sequence conflict" description="In Ref. 2; AAA46641." evidence="3" ref="2">
    <original>H</original>
    <variation>L</variation>
    <location>
        <position position="66"/>
    </location>
</feature>
<feature type="sequence conflict" description="In Ref. 2; AAA46641." evidence="3" ref="2">
    <original>I</original>
    <variation>N</variation>
    <location>
        <position position="162"/>
    </location>
</feature>
<feature type="helix" evidence="4">
    <location>
        <begin position="36"/>
        <end position="39"/>
    </location>
</feature>
<feature type="strand" evidence="4">
    <location>
        <begin position="42"/>
        <end position="52"/>
    </location>
</feature>
<feature type="strand" evidence="4">
    <location>
        <begin position="57"/>
        <end position="66"/>
    </location>
</feature>
<feature type="helix" evidence="4">
    <location>
        <begin position="78"/>
        <end position="100"/>
    </location>
</feature>
<feature type="helix" evidence="4">
    <location>
        <begin position="148"/>
        <end position="190"/>
    </location>
</feature>
<feature type="turn" evidence="4">
    <location>
        <begin position="191"/>
        <end position="195"/>
    </location>
</feature>
<feature type="helix" evidence="4">
    <location>
        <begin position="196"/>
        <end position="220"/>
    </location>
</feature>
<feature type="helix" evidence="4">
    <location>
        <begin position="222"/>
        <end position="226"/>
    </location>
</feature>
<feature type="helix" evidence="4">
    <location>
        <begin position="235"/>
        <end position="241"/>
    </location>
</feature>
<feature type="turn" evidence="4">
    <location>
        <begin position="242"/>
        <end position="244"/>
    </location>
</feature>
<feature type="helix" evidence="4">
    <location>
        <begin position="246"/>
        <end position="253"/>
    </location>
</feature>
<feature type="helix" evidence="4">
    <location>
        <begin position="257"/>
        <end position="259"/>
    </location>
</feature>
<feature type="helix" evidence="4">
    <location>
        <begin position="260"/>
        <end position="264"/>
    </location>
</feature>
<feature type="turn" evidence="4">
    <location>
        <begin position="265"/>
        <end position="267"/>
    </location>
</feature>
<feature type="strand" evidence="4">
    <location>
        <begin position="269"/>
        <end position="277"/>
    </location>
</feature>
<feature type="turn" evidence="4">
    <location>
        <begin position="278"/>
        <end position="281"/>
    </location>
</feature>
<feature type="strand" evidence="4">
    <location>
        <begin position="282"/>
        <end position="289"/>
    </location>
</feature>
<feature type="strand" evidence="4">
    <location>
        <begin position="293"/>
        <end position="305"/>
    </location>
</feature>
<feature type="strand" evidence="4">
    <location>
        <begin position="311"/>
        <end position="317"/>
    </location>
</feature>
<feature type="strand" evidence="4">
    <location>
        <begin position="321"/>
        <end position="326"/>
    </location>
</feature>
<feature type="strand" evidence="4">
    <location>
        <begin position="329"/>
        <end position="333"/>
    </location>
</feature>
<feature type="strand" evidence="4">
    <location>
        <begin position="337"/>
        <end position="340"/>
    </location>
</feature>
<feature type="strand" evidence="4">
    <location>
        <begin position="342"/>
        <end position="348"/>
    </location>
</feature>
<feature type="helix" evidence="4">
    <location>
        <begin position="357"/>
        <end position="364"/>
    </location>
</feature>
<feature type="helix" evidence="4">
    <location>
        <begin position="367"/>
        <end position="369"/>
    </location>
</feature>
<feature type="strand" evidence="4">
    <location>
        <begin position="382"/>
        <end position="386"/>
    </location>
</feature>
<feature type="strand" evidence="4">
    <location>
        <begin position="389"/>
        <end position="392"/>
    </location>
</feature>
<feature type="turn" evidence="4">
    <location>
        <begin position="394"/>
        <end position="396"/>
    </location>
</feature>
<feature type="strand" evidence="4">
    <location>
        <begin position="399"/>
        <end position="404"/>
    </location>
</feature>
<feature type="strand" evidence="4">
    <location>
        <begin position="406"/>
        <end position="408"/>
    </location>
</feature>
<feature type="strand" evidence="4">
    <location>
        <begin position="415"/>
        <end position="419"/>
    </location>
</feature>
<feature type="turn" evidence="4">
    <location>
        <begin position="421"/>
        <end position="423"/>
    </location>
</feature>
<feature type="strand" evidence="4">
    <location>
        <begin position="425"/>
        <end position="428"/>
    </location>
</feature>
<feature type="helix" evidence="4">
    <location>
        <begin position="464"/>
        <end position="486"/>
    </location>
</feature>
<reference key="1">
    <citation type="journal article" date="1989" name="Virology">
        <title>Newcastle disease virus evolution. II. Lack of gene recombination in generating virulent and avirulent strains.</title>
        <authorList>
            <person name="Toyoda T."/>
            <person name="Sakaguchi T."/>
            <person name="Hirota H."/>
            <person name="Gotoh B."/>
            <person name="Kuma K."/>
            <person name="Miyata T."/>
            <person name="Nagai Y."/>
        </authorList>
    </citation>
    <scope>NUCLEOTIDE SEQUENCE [GENOMIC RNA]</scope>
</reference>
<reference key="2">
    <citation type="journal article" date="1986" name="Virus Res.">
        <title>Nucleotide sequence of the gene encoding the Newcastle disease virus fusion protein and comparisons of paramyxovirus fusion protein sequences.</title>
        <authorList>
            <person name="McGinnes L.W."/>
            <person name="Morrison T.G."/>
        </authorList>
    </citation>
    <scope>NUCLEOTIDE SEQUENCE [GENOMIC RNA]</scope>
</reference>
<dbReference type="EMBL" id="M24700">
    <property type="protein sequence ID" value="AAA46650.1"/>
    <property type="molecule type" value="Genomic_RNA"/>
</dbReference>
<dbReference type="EMBL" id="M21881">
    <property type="protein sequence ID" value="AAA46641.1"/>
    <property type="molecule type" value="Genomic_RNA"/>
</dbReference>
<dbReference type="PIR" id="S07422">
    <property type="entry name" value="H46329"/>
</dbReference>
<dbReference type="PDB" id="3MAW">
    <property type="method" value="X-ray"/>
    <property type="resolution" value="3.50 A"/>
    <property type="chains" value="A/B=32-499"/>
</dbReference>
<dbReference type="PDBsum" id="3MAW"/>
<dbReference type="SMR" id="P12572"/>
<dbReference type="GlyCosmos" id="P12572">
    <property type="glycosylation" value="5 sites, No reported glycans"/>
</dbReference>
<dbReference type="EvolutionaryTrace" id="P12572"/>
<dbReference type="GO" id="GO:0020002">
    <property type="term" value="C:host cell plasma membrane"/>
    <property type="evidence" value="ECO:0007669"/>
    <property type="project" value="UniProtKB-SubCell"/>
</dbReference>
<dbReference type="GO" id="GO:0016020">
    <property type="term" value="C:membrane"/>
    <property type="evidence" value="ECO:0007669"/>
    <property type="project" value="UniProtKB-KW"/>
</dbReference>
<dbReference type="GO" id="GO:0019031">
    <property type="term" value="C:viral envelope"/>
    <property type="evidence" value="ECO:0007669"/>
    <property type="project" value="UniProtKB-KW"/>
</dbReference>
<dbReference type="GO" id="GO:0055036">
    <property type="term" value="C:virion membrane"/>
    <property type="evidence" value="ECO:0007669"/>
    <property type="project" value="UniProtKB-SubCell"/>
</dbReference>
<dbReference type="GO" id="GO:0019064">
    <property type="term" value="P:fusion of virus membrane with host plasma membrane"/>
    <property type="evidence" value="ECO:0007669"/>
    <property type="project" value="UniProtKB-KW"/>
</dbReference>
<dbReference type="GO" id="GO:0046718">
    <property type="term" value="P:symbiont entry into host cell"/>
    <property type="evidence" value="ECO:0007669"/>
    <property type="project" value="UniProtKB-KW"/>
</dbReference>
<dbReference type="Gene3D" id="1.10.287.2480">
    <property type="match status" value="1"/>
</dbReference>
<dbReference type="Gene3D" id="6.10.10.110">
    <property type="match status" value="1"/>
</dbReference>
<dbReference type="Gene3D" id="2.60.40.1690">
    <property type="entry name" value="Head and neck region of the ectodomain of NDV fusion glycoprotein"/>
    <property type="match status" value="1"/>
</dbReference>
<dbReference type="Gene3D" id="2.40.490.10">
    <property type="entry name" value="Newcastle disease virus like domain"/>
    <property type="match status" value="1"/>
</dbReference>
<dbReference type="InterPro" id="IPR000776">
    <property type="entry name" value="Fusion_F0_Paramyxovir"/>
</dbReference>
<dbReference type="Pfam" id="PF00523">
    <property type="entry name" value="Fusion_gly"/>
    <property type="match status" value="1"/>
</dbReference>
<dbReference type="SUPFAM" id="SSF69922">
    <property type="entry name" value="Head and neck region of the ectodomain of NDV fusion glycoprotein"/>
    <property type="match status" value="1"/>
</dbReference>
<dbReference type="SUPFAM" id="SSF58069">
    <property type="entry name" value="Virus ectodomain"/>
    <property type="match status" value="1"/>
</dbReference>
<organism>
    <name type="scientific">Newcastle disease virus (strain Chicken/Australia-Victoria/32)</name>
    <name type="common">NDV</name>
    <dbReference type="NCBI Taxonomy" id="11177"/>
    <lineage>
        <taxon>Viruses</taxon>
        <taxon>Riboviria</taxon>
        <taxon>Orthornavirae</taxon>
        <taxon>Negarnaviricota</taxon>
        <taxon>Haploviricotina</taxon>
        <taxon>Monjiviricetes</taxon>
        <taxon>Mononegavirales</taxon>
        <taxon>Paramyxoviridae</taxon>
        <taxon>Avulavirinae</taxon>
        <taxon>Orthoavulavirus</taxon>
        <taxon>Orthoavulavirus javaense</taxon>
        <taxon>Avian paramyxovirus 1</taxon>
    </lineage>
</organism>
<accession>P12572</accession>
<comment type="function">
    <text evidence="1">Class I viral fusion protein. Under the current model, the protein has at least 3 conformational states: pre-fusion native state, pre-hairpin intermediate state, and post-fusion hairpin state. During viral and plasma cell membrane fusion, the heptad repeat (HR) regions assume a trimer-of-hairpins structure, positioning the fusion peptide in close proximity to the C-terminal region of the ectodomain. The formation of this structure appears to drive apposition and subsequent fusion of viral and plasma cell membranes. Directs fusion of viral and cellular membranes leading to delivery of the nucleocapsid into the cytoplasm. This fusion is pH independent and occurs directly at the outer cell membrane. The trimer of F1-F2 (F protein) probably interacts with HN at the virion surface. Upon HN binding to its cellular receptor, the hydrophobic fusion peptide is unmasked and interacts with the cellular membrane, inducing the fusion between cell and virion membranes. Later in infection, F proteins expressed at the plasma membrane of infected cells could mediate fusion with adjacent cells to form syncytia, a cytopathic effect that could lead to tissue necrosis (By similarity).</text>
</comment>
<comment type="subunit">
    <text evidence="1">Homotrimer of disulfide-linked F1-F2.</text>
</comment>
<comment type="subcellular location">
    <subcellularLocation>
        <location evidence="1">Virion membrane</location>
        <topology evidence="1">Single-pass type I membrane protein</topology>
    </subcellularLocation>
    <subcellularLocation>
        <location evidence="1">Host cell membrane</location>
        <topology evidence="1">Single-pass membrane protein</topology>
    </subcellularLocation>
</comment>
<comment type="PTM">
    <text evidence="1">The inactive precursor F0 is glycosylated and proteolytically cleaved into F1 and F2 to be functionally active. The cleavage is mediated by cellular proteases during the transport and maturation of the polypeptide (By similarity).</text>
</comment>
<comment type="similarity">
    <text evidence="3">Belongs to the paramyxoviruses fusion glycoprotein family.</text>
</comment>
<name>FUS_NDVA</name>